<sequence>AKTDIPVNIYKPKNPYIGKCLSNEELVREGGTGTVRHLIFDISGGDLRYLEGQSIGIIPPGTDNNGKPHKLRLYSIASTRHGDHVDDKTVSLCVRQLEYKHPETGETVYGVCSTYLCNLEAGADVAITGPVGKEMLLPEDEDATIIMMATGTGIAPFRAFLWRIFKEQHEDYKFKGLAWLFFGIPYSPNILYQQELEELQEEFPENFRLTLAISREQQNPEGGKMYIQDRIKENADQLWELIQKPNTHTYICGLKGMEGGIDEGMSAAAGKFDVDWSDYQKELKKKHRWHVETY</sequence>
<evidence type="ECO:0000250" key="1"/>
<evidence type="ECO:0000255" key="2">
    <source>
        <dbReference type="PROSITE-ProRule" id="PRU00716"/>
    </source>
</evidence>
<evidence type="ECO:0000305" key="3"/>
<accession>P00454</accession>
<organism>
    <name type="scientific">Spirulina sp</name>
    <dbReference type="NCBI Taxonomy" id="1157"/>
    <lineage>
        <taxon>Bacteria</taxon>
        <taxon>Bacillati</taxon>
        <taxon>Cyanobacteriota</taxon>
        <taxon>Cyanophyceae</taxon>
        <taxon>Spirulinales</taxon>
        <taxon>Spirulinaceae</taxon>
        <taxon>Spirulina</taxon>
    </lineage>
</organism>
<protein>
    <recommendedName>
        <fullName>Ferredoxin--NADP reductase</fullName>
        <shortName>FNR</shortName>
        <ecNumber>1.18.1.2</ecNumber>
    </recommendedName>
</protein>
<feature type="chain" id="PRO_0000167635" description="Ferredoxin--NADP reductase">
    <location>
        <begin position="1"/>
        <end position="294"/>
    </location>
</feature>
<feature type="domain" description="FAD-binding FR-type" evidence="2">
    <location>
        <begin position="13"/>
        <end position="137"/>
    </location>
</feature>
<feature type="binding site" evidence="1">
    <location>
        <begin position="72"/>
        <end position="75"/>
    </location>
    <ligand>
        <name>FAD</name>
        <dbReference type="ChEBI" id="CHEBI:57692"/>
    </ligand>
</feature>
<feature type="binding site" evidence="1">
    <location>
        <position position="75"/>
    </location>
    <ligand>
        <name>NADP(+)</name>
        <dbReference type="ChEBI" id="CHEBI:58349"/>
    </ligand>
</feature>
<feature type="binding site" evidence="1">
    <location>
        <begin position="93"/>
        <end position="95"/>
    </location>
    <ligand>
        <name>FAD</name>
        <dbReference type="ChEBI" id="CHEBI:57692"/>
    </ligand>
</feature>
<feature type="binding site" evidence="1">
    <location>
        <position position="95"/>
    </location>
    <ligand>
        <name>NADP(+)</name>
        <dbReference type="ChEBI" id="CHEBI:58349"/>
    </ligand>
</feature>
<feature type="binding site" evidence="1">
    <location>
        <position position="99"/>
    </location>
    <ligand>
        <name>FAD</name>
        <dbReference type="ChEBI" id="CHEBI:57692"/>
    </ligand>
</feature>
<feature type="binding site" evidence="1">
    <location>
        <begin position="111"/>
        <end position="113"/>
    </location>
    <ligand>
        <name>FAD</name>
        <dbReference type="ChEBI" id="CHEBI:57692"/>
    </ligand>
</feature>
<feature type="binding site" evidence="1">
    <location>
        <position position="152"/>
    </location>
    <ligand>
        <name>FAD</name>
        <dbReference type="ChEBI" id="CHEBI:57692"/>
    </ligand>
</feature>
<feature type="binding site" evidence="1">
    <location>
        <position position="152"/>
    </location>
    <ligand>
        <name>NADP(+)</name>
        <dbReference type="ChEBI" id="CHEBI:58349"/>
    </ligand>
</feature>
<feature type="binding site" evidence="1">
    <location>
        <begin position="184"/>
        <end position="185"/>
    </location>
    <ligand>
        <name>NADP(+)</name>
        <dbReference type="ChEBI" id="CHEBI:58349"/>
    </ligand>
</feature>
<feature type="binding site" evidence="1">
    <location>
        <begin position="214"/>
        <end position="215"/>
    </location>
    <ligand>
        <name>NADP(+)</name>
        <dbReference type="ChEBI" id="CHEBI:58349"/>
    </ligand>
</feature>
<feature type="binding site" evidence="1">
    <location>
        <begin position="224"/>
        <end position="228"/>
    </location>
    <ligand>
        <name>NADP(+)</name>
        <dbReference type="ChEBI" id="CHEBI:58349"/>
    </ligand>
</feature>
<feature type="binding site" evidence="1">
    <location>
        <position position="224"/>
    </location>
    <ligand>
        <name>NADP(+)</name>
        <dbReference type="ChEBI" id="CHEBI:58349"/>
    </ligand>
</feature>
<feature type="binding site" evidence="1">
    <location>
        <begin position="253"/>
        <end position="254"/>
    </location>
    <ligand>
        <name>NADP(+)</name>
        <dbReference type="ChEBI" id="CHEBI:58349"/>
    </ligand>
</feature>
<feature type="binding site" evidence="1">
    <location>
        <position position="292"/>
    </location>
    <ligand>
        <name>NADP(+)</name>
        <dbReference type="ChEBI" id="CHEBI:58349"/>
    </ligand>
</feature>
<name>FENR_SPISP</name>
<comment type="catalytic activity">
    <reaction>
        <text>2 reduced [2Fe-2S]-[ferredoxin] + NADP(+) + H(+) = 2 oxidized [2Fe-2S]-[ferredoxin] + NADPH</text>
        <dbReference type="Rhea" id="RHEA:20125"/>
        <dbReference type="Rhea" id="RHEA-COMP:10000"/>
        <dbReference type="Rhea" id="RHEA-COMP:10001"/>
        <dbReference type="ChEBI" id="CHEBI:15378"/>
        <dbReference type="ChEBI" id="CHEBI:33737"/>
        <dbReference type="ChEBI" id="CHEBI:33738"/>
        <dbReference type="ChEBI" id="CHEBI:57783"/>
        <dbReference type="ChEBI" id="CHEBI:58349"/>
        <dbReference type="EC" id="1.18.1.2"/>
    </reaction>
</comment>
<comment type="cofactor">
    <cofactor>
        <name>FAD</name>
        <dbReference type="ChEBI" id="CHEBI:57692"/>
    </cofactor>
</comment>
<comment type="subcellular location">
    <subcellularLocation>
        <location>Cellular thylakoid membrane</location>
        <topology>Peripheral membrane protein</topology>
        <orientation>Cytoplasmic side</orientation>
    </subcellularLocation>
    <text>May be bound to the thylakoid membrane or anchored to the thylakoid-bound phycobilisomes.</text>
</comment>
<comment type="similarity">
    <text evidence="3">Belongs to the ferredoxin--NADP reductase type 1 family.</text>
</comment>
<reference key="1">
    <citation type="journal article" date="1984" name="J. Biochem.">
        <title>Spirulina ferredoxin-NADP+ reductase. The complete amino acid sequence.</title>
        <authorList>
            <person name="Yao Y."/>
            <person name="Tamura T."/>
            <person name="Wada K."/>
            <person name="Matsubara H."/>
            <person name="Kodo K."/>
        </authorList>
    </citation>
    <scope>PROTEIN SEQUENCE</scope>
    <scope>SEQUENCE REVISION</scope>
</reference>
<reference key="2">
    <citation type="journal article" date="1983" name="J. Biochem.">
        <title>Spirulina ferredoxin-NADP+ reductase. Further characterization with an improved preparation.</title>
        <authorList>
            <person name="Wada K."/>
            <person name="Tamura T."/>
            <person name="Matsubara H."/>
            <person name="Kodo K."/>
        </authorList>
    </citation>
    <scope>PROTEIN SEQUENCE OF 1-10</scope>
</reference>
<proteinExistence type="evidence at protein level"/>
<dbReference type="EC" id="1.18.1.2"/>
<dbReference type="PIR" id="A00531">
    <property type="entry name" value="RDSGXX"/>
</dbReference>
<dbReference type="SMR" id="P00454"/>
<dbReference type="GO" id="GO:0030089">
    <property type="term" value="C:phycobilisome"/>
    <property type="evidence" value="ECO:0007669"/>
    <property type="project" value="UniProtKB-KW"/>
</dbReference>
<dbReference type="GO" id="GO:0031676">
    <property type="term" value="C:plasma membrane-derived thylakoid membrane"/>
    <property type="evidence" value="ECO:0007669"/>
    <property type="project" value="UniProtKB-SubCell"/>
</dbReference>
<dbReference type="GO" id="GO:0004324">
    <property type="term" value="F:ferredoxin-NADP+ reductase activity"/>
    <property type="evidence" value="ECO:0007669"/>
    <property type="project" value="UniProtKB-EC"/>
</dbReference>
<dbReference type="CDD" id="cd06208">
    <property type="entry name" value="CYPOR_like_FNR"/>
    <property type="match status" value="1"/>
</dbReference>
<dbReference type="FunFam" id="3.40.50.80:FF:000008">
    <property type="entry name" value="Ferredoxin--NADP reductase, chloroplastic"/>
    <property type="match status" value="1"/>
</dbReference>
<dbReference type="Gene3D" id="3.40.50.80">
    <property type="entry name" value="Nucleotide-binding domain of ferredoxin-NADP reductase (FNR) module"/>
    <property type="match status" value="1"/>
</dbReference>
<dbReference type="Gene3D" id="2.40.30.10">
    <property type="entry name" value="Translation factors"/>
    <property type="match status" value="1"/>
</dbReference>
<dbReference type="InterPro" id="IPR017927">
    <property type="entry name" value="FAD-bd_FR_type"/>
</dbReference>
<dbReference type="InterPro" id="IPR001709">
    <property type="entry name" value="Flavoprot_Pyr_Nucl_cyt_Rdtase"/>
</dbReference>
<dbReference type="InterPro" id="IPR015701">
    <property type="entry name" value="FNR"/>
</dbReference>
<dbReference type="InterPro" id="IPR039261">
    <property type="entry name" value="FNR_nucleotide-bd"/>
</dbReference>
<dbReference type="InterPro" id="IPR035442">
    <property type="entry name" value="FNR_plant_Cyanobacteria"/>
</dbReference>
<dbReference type="InterPro" id="IPR001433">
    <property type="entry name" value="OxRdtase_FAD/NAD-bd"/>
</dbReference>
<dbReference type="InterPro" id="IPR017938">
    <property type="entry name" value="Riboflavin_synthase-like_b-brl"/>
</dbReference>
<dbReference type="NCBIfam" id="NF045929">
    <property type="entry name" value="FNRPetHCyano"/>
    <property type="match status" value="1"/>
</dbReference>
<dbReference type="PANTHER" id="PTHR43314">
    <property type="match status" value="1"/>
</dbReference>
<dbReference type="Pfam" id="PF00175">
    <property type="entry name" value="NAD_binding_1"/>
    <property type="match status" value="1"/>
</dbReference>
<dbReference type="PIRSF" id="PIRSF501178">
    <property type="entry name" value="FNR-PetH"/>
    <property type="match status" value="1"/>
</dbReference>
<dbReference type="PIRSF" id="PIRSF000361">
    <property type="entry name" value="Frd-NADP+_RD"/>
    <property type="match status" value="1"/>
</dbReference>
<dbReference type="PRINTS" id="PR00371">
    <property type="entry name" value="FPNCR"/>
</dbReference>
<dbReference type="SUPFAM" id="SSF52343">
    <property type="entry name" value="Ferredoxin reductase-like, C-terminal NADP-linked domain"/>
    <property type="match status" value="1"/>
</dbReference>
<dbReference type="SUPFAM" id="SSF63380">
    <property type="entry name" value="Riboflavin synthase domain-like"/>
    <property type="match status" value="1"/>
</dbReference>
<dbReference type="PROSITE" id="PS51384">
    <property type="entry name" value="FAD_FR"/>
    <property type="match status" value="1"/>
</dbReference>
<gene>
    <name type="primary">petH</name>
</gene>
<keyword id="KW-0042">Antenna complex</keyword>
<keyword id="KW-0903">Direct protein sequencing</keyword>
<keyword id="KW-0274">FAD</keyword>
<keyword id="KW-0285">Flavoprotein</keyword>
<keyword id="KW-0472">Membrane</keyword>
<keyword id="KW-0521">NADP</keyword>
<keyword id="KW-0560">Oxidoreductase</keyword>
<keyword id="KW-0605">Phycobilisome</keyword>
<keyword id="KW-0793">Thylakoid</keyword>